<feature type="chain" id="PRO_0000200597" description="Protein ECM5">
    <location>
        <begin position="1"/>
        <end position="1411"/>
    </location>
</feature>
<feature type="domain" description="JmjN" evidence="3">
    <location>
        <begin position="118"/>
        <end position="159"/>
    </location>
</feature>
<feature type="domain" description="ARID" evidence="2">
    <location>
        <begin position="185"/>
        <end position="279"/>
    </location>
</feature>
<feature type="domain" description="JmjC" evidence="4">
    <location>
        <begin position="476"/>
        <end position="695"/>
    </location>
</feature>
<feature type="zinc finger region" description="PHD-type" evidence="1">
    <location>
        <begin position="1238"/>
        <end position="1290"/>
    </location>
</feature>
<feature type="region of interest" description="Disordered" evidence="5">
    <location>
        <begin position="285"/>
        <end position="312"/>
    </location>
</feature>
<sequence length="1411" mass="162701">MSGHDSVTKISHILNEPVNEKVMVQNGFHESSKIADIELEIQERPSIKQWESPRSAVIPTSNHNFSPFLYTQFKSRGAAPFAPETIKSVDLVELPEGVPARVFHEKTGLFYQISPHSIPTFILAKKELPDPIKFYELVEDLGSVYGCVKLKIIPDADKFTQLNVDVDRLWFKARKQFFNSNEFQRTKIVDFYAKLYNFHNKIKKSTLTRIPSIDKRTLDLYRLRSCVKLRGGFNAVCEKKLWAQIGRELGYSGRIMSSLSTSLRSAYAKILLDFDIYEEEEQAARNNEKNEDMVESEIFRHSNSRSRDEEEPLHKKAKIHRDVFRAGSINHEFKRMRDIKHIKGFPTYFNSLTEFKLGYTQSTETTLPGYDFTFWENGMEIYDKSKYETKTSPVYNLRQYYEKSLAVFTAIVAKFGSSYPDLFAKHTTLPQKEFERLYFHLLSEHFIDFEIDTGLGLPCSMRSPGNNSSNEKFAIKNILDQWNLDNIPLNELSLLQHLDLDMANFTRTTYDIGMLFSCQGWSVSDHFLPSIDFNHLGSTKLVYSIAPKDMEKFEALIARGKSEWDTIQSRPRYSTSDDELKSFIETDFYKSFLDAEQSADYSNTGDNSKNSFPEDKIAGNTLHDGSQSDFIFEPNFILANGIKLYKTTQEQGSYIFKFPKAFTCSIGSGFYLSQNAKFAPSSWLRFSSEAAKWTSKMGFLPGLDVNQLLINALLNSNNPVLRKKCRDLISNYVVEEAENSKKLGELIGTVDVVYNKLNYISDISLESTGLSKIVVTHGALQRNLSLKEFVVLLEKPENGAHSICGIPIRDQSGNLNVCLHSYFDSASLGIALDGLDKPPTSYLLVHNEDFEKKWDVLMTSTFRNRTVPLNIIQYLISHTDSNTEFNRMLRSNFDDSLLLIEKCKKFIKTFVDVSCSVKDVDFGNGFNLRHLPLKFSDNMADNLESLYESVRKCSIEFSEKPTIIRLYHVSRQFPIDNRDIIDGNNLDLLKELYQKSLTIPLKVSYWTKLTRKICRLEWLSVYEHIFIERCDIKNEDPAKYSLPLLYSYFEFGLKYCDSEDIDKLGEVRKLILKYQDMMQKVRVFLKKDPPSKISLSDLEDVLLDIEEYRLPIQSSFFSELDYVIREIENAKKMNDVNILYNTDNIDKIDELIRKNDPKFVKFANQFNGSRLDKRPLASDNSGSVKAKQELKVFKLWNQHLDQIMQKNKFIEILPSIFRCLDLKSDKYIPLESCSKRQTKYCFCRRVEEGTAMVECEICKEWYHVDCISNGELVPPDDPNVLFVCSICTPPCMAVDNIEGVTFELDDLKRILVESLKLSLIPDPPILKNLFDVFAFALNFKNEMEKELFTNGYVNQLSSTHKIKYYLRKLKGSQCGFTNLTDPLRKHCQVKDAEAIKWLTDNGRIIITGIPN</sequence>
<comment type="function">
    <text>May be involved in cell wall organization and biogenesis.</text>
</comment>
<comment type="interaction">
    <interactant intactId="EBI-27382">
        <id>Q03214</id>
    </interactant>
    <interactant intactId="EBI-15864">
        <id>P32561</id>
        <label>RPD3</label>
    </interactant>
    <organismsDiffer>false</organismsDiffer>
    <experiments>5</experiments>
</comment>
<comment type="interaction">
    <interactant intactId="EBI-27382">
        <id>Q03214</id>
    </interactant>
    <interactant intactId="EBI-23958">
        <id>P53127</id>
        <label>SNT2</label>
    </interactant>
    <organismsDiffer>false</organismsDiffer>
    <experiments>5</experiments>
</comment>
<comment type="subcellular location">
    <subcellularLocation>
        <location evidence="2 3 6">Nucleus</location>
    </subcellularLocation>
</comment>
<comment type="miscellaneous">
    <text evidence="7">Present with 259 molecules/cell in log phase SD medium.</text>
</comment>
<protein>
    <recommendedName>
        <fullName>Protein ECM5</fullName>
    </recommendedName>
    <alternativeName>
        <fullName>Extracellular matrix protein 5</fullName>
    </alternativeName>
</protein>
<dbReference type="EMBL" id="Z49808">
    <property type="protein sequence ID" value="CAA89909.1"/>
    <property type="molecule type" value="Genomic_DNA"/>
</dbReference>
<dbReference type="EMBL" id="BK006946">
    <property type="protein sequence ID" value="DAA10073.1"/>
    <property type="molecule type" value="Genomic_DNA"/>
</dbReference>
<dbReference type="PIR" id="S55123">
    <property type="entry name" value="S55123"/>
</dbReference>
<dbReference type="RefSeq" id="NP_013901.1">
    <property type="nucleotide sequence ID" value="NM_001182682.1"/>
</dbReference>
<dbReference type="BioGRID" id="35354">
    <property type="interactions" value="71"/>
</dbReference>
<dbReference type="ComplexPortal" id="CPX-1372">
    <property type="entry name" value="SNT2C histone deacetylase complex"/>
</dbReference>
<dbReference type="DIP" id="DIP-6678N"/>
<dbReference type="FunCoup" id="Q03214">
    <property type="interactions" value="398"/>
</dbReference>
<dbReference type="IntAct" id="Q03214">
    <property type="interactions" value="6"/>
</dbReference>
<dbReference type="STRING" id="4932.YMR176W"/>
<dbReference type="iPTMnet" id="Q03214"/>
<dbReference type="PaxDb" id="4932-YMR176W"/>
<dbReference type="PeptideAtlas" id="Q03214"/>
<dbReference type="EnsemblFungi" id="YMR176W_mRNA">
    <property type="protein sequence ID" value="YMR176W"/>
    <property type="gene ID" value="YMR176W"/>
</dbReference>
<dbReference type="GeneID" id="855214"/>
<dbReference type="KEGG" id="sce:YMR176W"/>
<dbReference type="AGR" id="SGD:S000004788"/>
<dbReference type="SGD" id="S000004788">
    <property type="gene designation" value="ECM5"/>
</dbReference>
<dbReference type="VEuPathDB" id="FungiDB:YMR176W"/>
<dbReference type="eggNOG" id="KOG1246">
    <property type="taxonomic scope" value="Eukaryota"/>
</dbReference>
<dbReference type="GeneTree" id="ENSGT00940000159220"/>
<dbReference type="HOGENOM" id="CLU_250352_0_0_1"/>
<dbReference type="InParanoid" id="Q03214"/>
<dbReference type="OMA" id="GFDQVCK"/>
<dbReference type="OrthoDB" id="1678912at2759"/>
<dbReference type="BioCyc" id="YEAST:G3O-32864-MONOMER"/>
<dbReference type="BioGRID-ORCS" id="855214">
    <property type="hits" value="0 hits in 10 CRISPR screens"/>
</dbReference>
<dbReference type="PRO" id="PR:Q03214"/>
<dbReference type="Proteomes" id="UP000002311">
    <property type="component" value="Chromosome XIII"/>
</dbReference>
<dbReference type="RNAct" id="Q03214">
    <property type="molecule type" value="protein"/>
</dbReference>
<dbReference type="GO" id="GO:0000785">
    <property type="term" value="C:chromatin"/>
    <property type="evidence" value="ECO:0000318"/>
    <property type="project" value="GO_Central"/>
</dbReference>
<dbReference type="GO" id="GO:0005737">
    <property type="term" value="C:cytoplasm"/>
    <property type="evidence" value="ECO:0007005"/>
    <property type="project" value="SGD"/>
</dbReference>
<dbReference type="GO" id="GO:0005634">
    <property type="term" value="C:nucleus"/>
    <property type="evidence" value="ECO:0007005"/>
    <property type="project" value="SGD"/>
</dbReference>
<dbReference type="GO" id="GO:0070211">
    <property type="term" value="C:Snt2C complex"/>
    <property type="evidence" value="ECO:0000353"/>
    <property type="project" value="ComplexPortal"/>
</dbReference>
<dbReference type="GO" id="GO:0003677">
    <property type="term" value="F:DNA binding"/>
    <property type="evidence" value="ECO:0007669"/>
    <property type="project" value="InterPro"/>
</dbReference>
<dbReference type="GO" id="GO:0008270">
    <property type="term" value="F:zinc ion binding"/>
    <property type="evidence" value="ECO:0007669"/>
    <property type="project" value="UniProtKB-KW"/>
</dbReference>
<dbReference type="GO" id="GO:0071555">
    <property type="term" value="P:cell wall organization"/>
    <property type="evidence" value="ECO:0007669"/>
    <property type="project" value="UniProtKB-KW"/>
</dbReference>
<dbReference type="GO" id="GO:0034599">
    <property type="term" value="P:cellular response to oxidative stress"/>
    <property type="evidence" value="ECO:0000315"/>
    <property type="project" value="SGD"/>
</dbReference>
<dbReference type="GO" id="GO:0006338">
    <property type="term" value="P:chromatin remodeling"/>
    <property type="evidence" value="ECO:0000318"/>
    <property type="project" value="GO_Central"/>
</dbReference>
<dbReference type="GO" id="GO:0006355">
    <property type="term" value="P:regulation of DNA-templated transcription"/>
    <property type="evidence" value="ECO:0000303"/>
    <property type="project" value="ComplexPortal"/>
</dbReference>
<dbReference type="GO" id="GO:0010468">
    <property type="term" value="P:regulation of gene expression"/>
    <property type="evidence" value="ECO:0000318"/>
    <property type="project" value="GO_Central"/>
</dbReference>
<dbReference type="GO" id="GO:0006979">
    <property type="term" value="P:response to oxidative stress"/>
    <property type="evidence" value="ECO:0000303"/>
    <property type="project" value="ComplexPortal"/>
</dbReference>
<dbReference type="CDD" id="cd16100">
    <property type="entry name" value="ARID"/>
    <property type="match status" value="1"/>
</dbReference>
<dbReference type="CDD" id="cd15518">
    <property type="entry name" value="PHD_Ecm5p_Lid2p_like"/>
    <property type="match status" value="1"/>
</dbReference>
<dbReference type="FunFam" id="1.10.150.60:FF:000020">
    <property type="entry name" value="Ecm5p"/>
    <property type="match status" value="1"/>
</dbReference>
<dbReference type="FunFam" id="3.30.40.10:FF:000776">
    <property type="entry name" value="Ecm5p"/>
    <property type="match status" value="1"/>
</dbReference>
<dbReference type="Gene3D" id="1.10.150.60">
    <property type="entry name" value="ARID DNA-binding domain"/>
    <property type="match status" value="1"/>
</dbReference>
<dbReference type="Gene3D" id="2.60.120.650">
    <property type="entry name" value="Cupin"/>
    <property type="match status" value="1"/>
</dbReference>
<dbReference type="Gene3D" id="3.30.40.10">
    <property type="entry name" value="Zinc/RING finger domain, C3HC4 (zinc finger)"/>
    <property type="match status" value="1"/>
</dbReference>
<dbReference type="InterPro" id="IPR001606">
    <property type="entry name" value="ARID_dom"/>
</dbReference>
<dbReference type="InterPro" id="IPR036431">
    <property type="entry name" value="ARID_dom_sf"/>
</dbReference>
<dbReference type="InterPro" id="IPR003347">
    <property type="entry name" value="JmjC_dom"/>
</dbReference>
<dbReference type="InterPro" id="IPR003349">
    <property type="entry name" value="JmjN"/>
</dbReference>
<dbReference type="InterPro" id="IPR019786">
    <property type="entry name" value="Zinc_finger_PHD-type_CS"/>
</dbReference>
<dbReference type="InterPro" id="IPR011011">
    <property type="entry name" value="Znf_FYVE_PHD"/>
</dbReference>
<dbReference type="InterPro" id="IPR001965">
    <property type="entry name" value="Znf_PHD"/>
</dbReference>
<dbReference type="InterPro" id="IPR019787">
    <property type="entry name" value="Znf_PHD-finger"/>
</dbReference>
<dbReference type="InterPro" id="IPR013083">
    <property type="entry name" value="Znf_RING/FYVE/PHD"/>
</dbReference>
<dbReference type="PANTHER" id="PTHR10694">
    <property type="entry name" value="LYSINE-SPECIFIC DEMETHYLASE"/>
    <property type="match status" value="1"/>
</dbReference>
<dbReference type="PANTHER" id="PTHR10694:SF113">
    <property type="entry name" value="PROTEIN JUMONJI"/>
    <property type="match status" value="1"/>
</dbReference>
<dbReference type="Pfam" id="PF01388">
    <property type="entry name" value="ARID"/>
    <property type="match status" value="1"/>
</dbReference>
<dbReference type="Pfam" id="PF00628">
    <property type="entry name" value="PHD"/>
    <property type="match status" value="1"/>
</dbReference>
<dbReference type="SMART" id="SM01014">
    <property type="entry name" value="ARID"/>
    <property type="match status" value="1"/>
</dbReference>
<dbReference type="SMART" id="SM00501">
    <property type="entry name" value="BRIGHT"/>
    <property type="match status" value="1"/>
</dbReference>
<dbReference type="SMART" id="SM00558">
    <property type="entry name" value="JmjC"/>
    <property type="match status" value="1"/>
</dbReference>
<dbReference type="SMART" id="SM00249">
    <property type="entry name" value="PHD"/>
    <property type="match status" value="1"/>
</dbReference>
<dbReference type="SUPFAM" id="SSF46774">
    <property type="entry name" value="ARID-like"/>
    <property type="match status" value="1"/>
</dbReference>
<dbReference type="SUPFAM" id="SSF57903">
    <property type="entry name" value="FYVE/PHD zinc finger"/>
    <property type="match status" value="1"/>
</dbReference>
<dbReference type="PROSITE" id="PS51011">
    <property type="entry name" value="ARID"/>
    <property type="match status" value="1"/>
</dbReference>
<dbReference type="PROSITE" id="PS51184">
    <property type="entry name" value="JMJC"/>
    <property type="match status" value="1"/>
</dbReference>
<dbReference type="PROSITE" id="PS51183">
    <property type="entry name" value="JMJN"/>
    <property type="match status" value="1"/>
</dbReference>
<dbReference type="PROSITE" id="PS01359">
    <property type="entry name" value="ZF_PHD_1"/>
    <property type="match status" value="1"/>
</dbReference>
<dbReference type="PROSITE" id="PS50016">
    <property type="entry name" value="ZF_PHD_2"/>
    <property type="match status" value="1"/>
</dbReference>
<evidence type="ECO:0000255" key="1">
    <source>
        <dbReference type="PROSITE-ProRule" id="PRU00146"/>
    </source>
</evidence>
<evidence type="ECO:0000255" key="2">
    <source>
        <dbReference type="PROSITE-ProRule" id="PRU00355"/>
    </source>
</evidence>
<evidence type="ECO:0000255" key="3">
    <source>
        <dbReference type="PROSITE-ProRule" id="PRU00537"/>
    </source>
</evidence>
<evidence type="ECO:0000255" key="4">
    <source>
        <dbReference type="PROSITE-ProRule" id="PRU00538"/>
    </source>
</evidence>
<evidence type="ECO:0000256" key="5">
    <source>
        <dbReference type="SAM" id="MobiDB-lite"/>
    </source>
</evidence>
<evidence type="ECO:0000269" key="6">
    <source>
    </source>
</evidence>
<evidence type="ECO:0000269" key="7">
    <source>
    </source>
</evidence>
<keyword id="KW-0961">Cell wall biogenesis/degradation</keyword>
<keyword id="KW-0479">Metal-binding</keyword>
<keyword id="KW-0539">Nucleus</keyword>
<keyword id="KW-1185">Reference proteome</keyword>
<keyword id="KW-0862">Zinc</keyword>
<keyword id="KW-0863">Zinc-finger</keyword>
<gene>
    <name type="primary">ECM5</name>
    <name type="ordered locus">YMR176W</name>
    <name type="ORF">YM8010.06</name>
</gene>
<accession>Q03214</accession>
<accession>D6VZZ9</accession>
<proteinExistence type="evidence at protein level"/>
<organism>
    <name type="scientific">Saccharomyces cerevisiae (strain ATCC 204508 / S288c)</name>
    <name type="common">Baker's yeast</name>
    <dbReference type="NCBI Taxonomy" id="559292"/>
    <lineage>
        <taxon>Eukaryota</taxon>
        <taxon>Fungi</taxon>
        <taxon>Dikarya</taxon>
        <taxon>Ascomycota</taxon>
        <taxon>Saccharomycotina</taxon>
        <taxon>Saccharomycetes</taxon>
        <taxon>Saccharomycetales</taxon>
        <taxon>Saccharomycetaceae</taxon>
        <taxon>Saccharomyces</taxon>
    </lineage>
</organism>
<name>ECM5_YEAST</name>
<reference key="1">
    <citation type="journal article" date="1997" name="Nature">
        <title>The nucleotide sequence of Saccharomyces cerevisiae chromosome XIII.</title>
        <authorList>
            <person name="Bowman S."/>
            <person name="Churcher C.M."/>
            <person name="Badcock K."/>
            <person name="Brown D."/>
            <person name="Chillingworth T."/>
            <person name="Connor R."/>
            <person name="Dedman K."/>
            <person name="Devlin K."/>
            <person name="Gentles S."/>
            <person name="Hamlin N."/>
            <person name="Hunt S."/>
            <person name="Jagels K."/>
            <person name="Lye G."/>
            <person name="Moule S."/>
            <person name="Odell C."/>
            <person name="Pearson D."/>
            <person name="Rajandream M.A."/>
            <person name="Rice P."/>
            <person name="Skelton J."/>
            <person name="Walsh S.V."/>
            <person name="Whitehead S."/>
            <person name="Barrell B.G."/>
        </authorList>
    </citation>
    <scope>NUCLEOTIDE SEQUENCE [LARGE SCALE GENOMIC DNA]</scope>
    <source>
        <strain>ATCC 204508 / S288c</strain>
    </source>
</reference>
<reference key="2">
    <citation type="journal article" date="2014" name="G3 (Bethesda)">
        <title>The reference genome sequence of Saccharomyces cerevisiae: Then and now.</title>
        <authorList>
            <person name="Engel S.R."/>
            <person name="Dietrich F.S."/>
            <person name="Fisk D.G."/>
            <person name="Binkley G."/>
            <person name="Balakrishnan R."/>
            <person name="Costanzo M.C."/>
            <person name="Dwight S.S."/>
            <person name="Hitz B.C."/>
            <person name="Karra K."/>
            <person name="Nash R.S."/>
            <person name="Weng S."/>
            <person name="Wong E.D."/>
            <person name="Lloyd P."/>
            <person name="Skrzypek M.S."/>
            <person name="Miyasato S.R."/>
            <person name="Simison M."/>
            <person name="Cherry J.M."/>
        </authorList>
    </citation>
    <scope>GENOME REANNOTATION</scope>
    <source>
        <strain>ATCC 204508 / S288c</strain>
    </source>
</reference>
<reference key="3">
    <citation type="journal article" date="1997" name="Genetics">
        <title>Large scale identification of genes involved in cell surface biosynthesis and architecture in Saccharomyces cerevisiae.</title>
        <authorList>
            <person name="Lussier M."/>
            <person name="White A.-M."/>
            <person name="Sheraton J."/>
            <person name="di Paolo T."/>
            <person name="Treadwell J."/>
            <person name="Southard S.B."/>
            <person name="Horenstein C.I."/>
            <person name="Chen-Weiner J."/>
            <person name="Ram A.F.J."/>
            <person name="Kapteyn J.C."/>
            <person name="Roemer T.W."/>
            <person name="Vo D.H."/>
            <person name="Bondoc D.C."/>
            <person name="Hall J."/>
            <person name="Zhong W.-W."/>
            <person name="Sdicu A.-M."/>
            <person name="Davies J."/>
            <person name="Klis F.M."/>
            <person name="Robbins P.W."/>
            <person name="Bussey H."/>
        </authorList>
    </citation>
    <scope>IDENTIFICATION</scope>
</reference>
<reference key="4">
    <citation type="journal article" date="2003" name="Nature">
        <title>Global analysis of protein localization in budding yeast.</title>
        <authorList>
            <person name="Huh W.-K."/>
            <person name="Falvo J.V."/>
            <person name="Gerke L.C."/>
            <person name="Carroll A.S."/>
            <person name="Howson R.W."/>
            <person name="Weissman J.S."/>
            <person name="O'Shea E.K."/>
        </authorList>
    </citation>
    <scope>SUBCELLULAR LOCATION [LARGE SCALE ANALYSIS]</scope>
</reference>
<reference key="5">
    <citation type="journal article" date="2003" name="Nature">
        <title>Global analysis of protein expression in yeast.</title>
        <authorList>
            <person name="Ghaemmaghami S."/>
            <person name="Huh W.-K."/>
            <person name="Bower K."/>
            <person name="Howson R.W."/>
            <person name="Belle A."/>
            <person name="Dephoure N."/>
            <person name="O'Shea E.K."/>
            <person name="Weissman J.S."/>
        </authorList>
    </citation>
    <scope>LEVEL OF PROTEIN EXPRESSION [LARGE SCALE ANALYSIS]</scope>
</reference>